<keyword id="KW-0687">Ribonucleoprotein</keyword>
<keyword id="KW-0689">Ribosomal protein</keyword>
<keyword id="KW-0694">RNA-binding</keyword>
<keyword id="KW-0699">rRNA-binding</keyword>
<sequence length="120" mass="12830">MASRKEALARRANRVRRHLKSVANGRPRLSVHRSSKNIYAQVIDDVAGKTLASASTLEKDLRGSLKTGADTAAATVVGKLLAERASKAGVTEVVFDRGAFIYHGRIKALAEAAREGGLTF</sequence>
<feature type="chain" id="PRO_0000251354" description="Large ribosomal subunit protein uL18">
    <location>
        <begin position="1"/>
        <end position="120"/>
    </location>
</feature>
<accession>Q1MIC5</accession>
<comment type="function">
    <text evidence="1">This is one of the proteins that bind and probably mediate the attachment of the 5S RNA into the large ribosomal subunit, where it forms part of the central protuberance.</text>
</comment>
<comment type="subunit">
    <text evidence="1">Part of the 50S ribosomal subunit; part of the 5S rRNA/L5/L18/L25 subcomplex. Contacts the 5S and 23S rRNAs.</text>
</comment>
<comment type="similarity">
    <text evidence="1">Belongs to the universal ribosomal protein uL18 family.</text>
</comment>
<gene>
    <name evidence="1" type="primary">rplR</name>
    <name type="ordered locus">RL1790</name>
</gene>
<protein>
    <recommendedName>
        <fullName evidence="1">Large ribosomal subunit protein uL18</fullName>
    </recommendedName>
    <alternativeName>
        <fullName evidence="2">50S ribosomal protein L18</fullName>
    </alternativeName>
</protein>
<name>RL18_RHIJ3</name>
<reference key="1">
    <citation type="journal article" date="2006" name="Genome Biol.">
        <title>The genome of Rhizobium leguminosarum has recognizable core and accessory components.</title>
        <authorList>
            <person name="Young J.P.W."/>
            <person name="Crossman L.C."/>
            <person name="Johnston A.W.B."/>
            <person name="Thomson N.R."/>
            <person name="Ghazoui Z.F."/>
            <person name="Hull K.H."/>
            <person name="Wexler M."/>
            <person name="Curson A.R.J."/>
            <person name="Todd J.D."/>
            <person name="Poole P.S."/>
            <person name="Mauchline T.H."/>
            <person name="East A.K."/>
            <person name="Quail M.A."/>
            <person name="Churcher C."/>
            <person name="Arrowsmith C."/>
            <person name="Cherevach I."/>
            <person name="Chillingworth T."/>
            <person name="Clarke K."/>
            <person name="Cronin A."/>
            <person name="Davis P."/>
            <person name="Fraser A."/>
            <person name="Hance Z."/>
            <person name="Hauser H."/>
            <person name="Jagels K."/>
            <person name="Moule S."/>
            <person name="Mungall K."/>
            <person name="Norbertczak H."/>
            <person name="Rabbinowitsch E."/>
            <person name="Sanders M."/>
            <person name="Simmonds M."/>
            <person name="Whitehead S."/>
            <person name="Parkhill J."/>
        </authorList>
    </citation>
    <scope>NUCLEOTIDE SEQUENCE [LARGE SCALE GENOMIC DNA]</scope>
    <source>
        <strain>DSM 114642 / LMG 32736 / 3841</strain>
    </source>
</reference>
<proteinExistence type="inferred from homology"/>
<dbReference type="EMBL" id="AM236080">
    <property type="protein sequence ID" value="CAK07285.1"/>
    <property type="molecule type" value="Genomic_DNA"/>
</dbReference>
<dbReference type="RefSeq" id="WP_003547564.1">
    <property type="nucleotide sequence ID" value="NC_008380.1"/>
</dbReference>
<dbReference type="SMR" id="Q1MIC5"/>
<dbReference type="EnsemblBacteria" id="CAK07285">
    <property type="protein sequence ID" value="CAK07285"/>
    <property type="gene ID" value="RL1790"/>
</dbReference>
<dbReference type="GeneID" id="84669503"/>
<dbReference type="KEGG" id="rle:RL1790"/>
<dbReference type="eggNOG" id="COG0256">
    <property type="taxonomic scope" value="Bacteria"/>
</dbReference>
<dbReference type="HOGENOM" id="CLU_098841_0_1_5"/>
<dbReference type="Proteomes" id="UP000006575">
    <property type="component" value="Chromosome"/>
</dbReference>
<dbReference type="GO" id="GO:0022625">
    <property type="term" value="C:cytosolic large ribosomal subunit"/>
    <property type="evidence" value="ECO:0007669"/>
    <property type="project" value="TreeGrafter"/>
</dbReference>
<dbReference type="GO" id="GO:0008097">
    <property type="term" value="F:5S rRNA binding"/>
    <property type="evidence" value="ECO:0007669"/>
    <property type="project" value="TreeGrafter"/>
</dbReference>
<dbReference type="GO" id="GO:0003735">
    <property type="term" value="F:structural constituent of ribosome"/>
    <property type="evidence" value="ECO:0007669"/>
    <property type="project" value="InterPro"/>
</dbReference>
<dbReference type="GO" id="GO:0006412">
    <property type="term" value="P:translation"/>
    <property type="evidence" value="ECO:0007669"/>
    <property type="project" value="UniProtKB-UniRule"/>
</dbReference>
<dbReference type="CDD" id="cd00432">
    <property type="entry name" value="Ribosomal_L18_L5e"/>
    <property type="match status" value="1"/>
</dbReference>
<dbReference type="FunFam" id="3.30.420.100:FF:000001">
    <property type="entry name" value="50S ribosomal protein L18"/>
    <property type="match status" value="1"/>
</dbReference>
<dbReference type="Gene3D" id="3.30.420.100">
    <property type="match status" value="1"/>
</dbReference>
<dbReference type="HAMAP" id="MF_01337_B">
    <property type="entry name" value="Ribosomal_uL18_B"/>
    <property type="match status" value="1"/>
</dbReference>
<dbReference type="InterPro" id="IPR004389">
    <property type="entry name" value="Ribosomal_uL18_bac-type"/>
</dbReference>
<dbReference type="InterPro" id="IPR005484">
    <property type="entry name" value="Ribosomal_uL18_bac/euk"/>
</dbReference>
<dbReference type="NCBIfam" id="TIGR00060">
    <property type="entry name" value="L18_bact"/>
    <property type="match status" value="1"/>
</dbReference>
<dbReference type="PANTHER" id="PTHR12899">
    <property type="entry name" value="39S RIBOSOMAL PROTEIN L18, MITOCHONDRIAL"/>
    <property type="match status" value="1"/>
</dbReference>
<dbReference type="PANTHER" id="PTHR12899:SF3">
    <property type="entry name" value="LARGE RIBOSOMAL SUBUNIT PROTEIN UL18M"/>
    <property type="match status" value="1"/>
</dbReference>
<dbReference type="Pfam" id="PF00861">
    <property type="entry name" value="Ribosomal_L18p"/>
    <property type="match status" value="1"/>
</dbReference>
<dbReference type="SUPFAM" id="SSF53137">
    <property type="entry name" value="Translational machinery components"/>
    <property type="match status" value="1"/>
</dbReference>
<organism>
    <name type="scientific">Rhizobium johnstonii (strain DSM 114642 / LMG 32736 / 3841)</name>
    <name type="common">Rhizobium leguminosarum bv. viciae</name>
    <dbReference type="NCBI Taxonomy" id="216596"/>
    <lineage>
        <taxon>Bacteria</taxon>
        <taxon>Pseudomonadati</taxon>
        <taxon>Pseudomonadota</taxon>
        <taxon>Alphaproteobacteria</taxon>
        <taxon>Hyphomicrobiales</taxon>
        <taxon>Rhizobiaceae</taxon>
        <taxon>Rhizobium/Agrobacterium group</taxon>
        <taxon>Rhizobium</taxon>
        <taxon>Rhizobium johnstonii</taxon>
    </lineage>
</organism>
<evidence type="ECO:0000255" key="1">
    <source>
        <dbReference type="HAMAP-Rule" id="MF_01337"/>
    </source>
</evidence>
<evidence type="ECO:0000305" key="2"/>